<gene>
    <name evidence="1" type="primary">frdC</name>
    <name type="ordered locus">EFER_4206</name>
</gene>
<dbReference type="EMBL" id="CU928158">
    <property type="protein sequence ID" value="CAQ91626.1"/>
    <property type="molecule type" value="Genomic_DNA"/>
</dbReference>
<dbReference type="RefSeq" id="WP_000208757.1">
    <property type="nucleotide sequence ID" value="NC_011740.1"/>
</dbReference>
<dbReference type="SMR" id="B7LLT6"/>
<dbReference type="GeneID" id="93777670"/>
<dbReference type="KEGG" id="efe:EFER_4206"/>
<dbReference type="HOGENOM" id="CLU_156492_0_0_6"/>
<dbReference type="OrthoDB" id="8909678at2"/>
<dbReference type="Proteomes" id="UP000000745">
    <property type="component" value="Chromosome"/>
</dbReference>
<dbReference type="GO" id="GO:0045283">
    <property type="term" value="C:fumarate reductase complex"/>
    <property type="evidence" value="ECO:0007669"/>
    <property type="project" value="UniProtKB-UniRule"/>
</dbReference>
<dbReference type="GO" id="GO:0005886">
    <property type="term" value="C:plasma membrane"/>
    <property type="evidence" value="ECO:0007669"/>
    <property type="project" value="UniProtKB-SubCell"/>
</dbReference>
<dbReference type="GO" id="GO:0000104">
    <property type="term" value="F:succinate dehydrogenase activity"/>
    <property type="evidence" value="ECO:0007669"/>
    <property type="project" value="UniProtKB-UniRule"/>
</dbReference>
<dbReference type="CDD" id="cd00546">
    <property type="entry name" value="QFR_TypeD_subunitC"/>
    <property type="match status" value="1"/>
</dbReference>
<dbReference type="FunFam" id="1.20.1300.10:FF:000003">
    <property type="entry name" value="Fumarate reductase subunit C"/>
    <property type="match status" value="1"/>
</dbReference>
<dbReference type="Gene3D" id="1.20.1300.10">
    <property type="entry name" value="Fumarate reductase/succinate dehydrogenase, transmembrane subunit"/>
    <property type="match status" value="1"/>
</dbReference>
<dbReference type="HAMAP" id="MF_00708">
    <property type="entry name" value="Fumarate_red_C"/>
    <property type="match status" value="1"/>
</dbReference>
<dbReference type="InterPro" id="IPR003510">
    <property type="entry name" value="Fumarate_red_C"/>
</dbReference>
<dbReference type="InterPro" id="IPR034804">
    <property type="entry name" value="SQR/QFR_C/D"/>
</dbReference>
<dbReference type="NCBIfam" id="NF003445">
    <property type="entry name" value="PRK04987.1"/>
    <property type="match status" value="1"/>
</dbReference>
<dbReference type="Pfam" id="PF02300">
    <property type="entry name" value="Fumarate_red_C"/>
    <property type="match status" value="1"/>
</dbReference>
<dbReference type="PIRSF" id="PIRSF000180">
    <property type="entry name" value="FrdC"/>
    <property type="match status" value="1"/>
</dbReference>
<dbReference type="SUPFAM" id="SSF81343">
    <property type="entry name" value="Fumarate reductase respiratory complex transmembrane subunits"/>
    <property type="match status" value="1"/>
</dbReference>
<keyword id="KW-0997">Cell inner membrane</keyword>
<keyword id="KW-1003">Cell membrane</keyword>
<keyword id="KW-0472">Membrane</keyword>
<keyword id="KW-0812">Transmembrane</keyword>
<keyword id="KW-1133">Transmembrane helix</keyword>
<protein>
    <recommendedName>
        <fullName evidence="1">Fumarate reductase subunit C</fullName>
    </recommendedName>
    <alternativeName>
        <fullName evidence="1">Fumarate reductase 15 kDa hydrophobic protein</fullName>
    </alternativeName>
    <alternativeName>
        <fullName evidence="1">Quinol-fumarate reductase subunit C</fullName>
        <shortName evidence="1">QFR subunit C</shortName>
    </alternativeName>
</protein>
<reference key="1">
    <citation type="journal article" date="2009" name="PLoS Genet.">
        <title>Organised genome dynamics in the Escherichia coli species results in highly diverse adaptive paths.</title>
        <authorList>
            <person name="Touchon M."/>
            <person name="Hoede C."/>
            <person name="Tenaillon O."/>
            <person name="Barbe V."/>
            <person name="Baeriswyl S."/>
            <person name="Bidet P."/>
            <person name="Bingen E."/>
            <person name="Bonacorsi S."/>
            <person name="Bouchier C."/>
            <person name="Bouvet O."/>
            <person name="Calteau A."/>
            <person name="Chiapello H."/>
            <person name="Clermont O."/>
            <person name="Cruveiller S."/>
            <person name="Danchin A."/>
            <person name="Diard M."/>
            <person name="Dossat C."/>
            <person name="Karoui M.E."/>
            <person name="Frapy E."/>
            <person name="Garry L."/>
            <person name="Ghigo J.M."/>
            <person name="Gilles A.M."/>
            <person name="Johnson J."/>
            <person name="Le Bouguenec C."/>
            <person name="Lescat M."/>
            <person name="Mangenot S."/>
            <person name="Martinez-Jehanne V."/>
            <person name="Matic I."/>
            <person name="Nassif X."/>
            <person name="Oztas S."/>
            <person name="Petit M.A."/>
            <person name="Pichon C."/>
            <person name="Rouy Z."/>
            <person name="Ruf C.S."/>
            <person name="Schneider D."/>
            <person name="Tourret J."/>
            <person name="Vacherie B."/>
            <person name="Vallenet D."/>
            <person name="Medigue C."/>
            <person name="Rocha E.P.C."/>
            <person name="Denamur E."/>
        </authorList>
    </citation>
    <scope>NUCLEOTIDE SEQUENCE [LARGE SCALE GENOMIC DNA]</scope>
    <source>
        <strain>ATCC 35469 / DSM 13698 / BCRC 15582 / CCUG 18766 / IAM 14443 / JCM 21226 / LMG 7866 / NBRC 102419 / NCTC 12128 / CDC 0568-73</strain>
    </source>
</reference>
<sequence length="131" mass="15015">MTTKRKPYVRPMTSTWWKKLPFYRFYMLREGTAVPAVWFSIELIFGLFALKNGPEAWAGFVDFLQNPVIVIINLITLAAALLHTKTWFELAPKAANIIVKDEKMGPEPIIKSLWAVTVVATIVILFVALYW</sequence>
<accession>B7LLT6</accession>
<name>FRDC_ESCF3</name>
<feature type="chain" id="PRO_1000132377" description="Fumarate reductase subunit C">
    <location>
        <begin position="1"/>
        <end position="131"/>
    </location>
</feature>
<feature type="transmembrane region" description="Helical" evidence="1">
    <location>
        <begin position="30"/>
        <end position="50"/>
    </location>
</feature>
<feature type="transmembrane region" description="Helical" evidence="1">
    <location>
        <begin position="63"/>
        <end position="83"/>
    </location>
</feature>
<feature type="transmembrane region" description="Helical" evidence="1">
    <location>
        <begin position="109"/>
        <end position="129"/>
    </location>
</feature>
<comment type="function">
    <text evidence="1">Two distinct, membrane-bound, FAD-containing enzymes are responsible for the catalysis of fumarate and succinate interconversion; fumarate reductase is used in anaerobic growth, and succinate dehydrogenase is used in aerobic growth. Anchors the catalytic components of the fumarate reductase complex to the cell inner membrane, binds quinones.</text>
</comment>
<comment type="subunit">
    <text evidence="1">Part of an enzyme complex containing four subunits: a flavoprotein (FrdA), an iron-sulfur protein (FrdB), and two hydrophobic anchor proteins (FrdC and FrdD).</text>
</comment>
<comment type="subcellular location">
    <subcellularLocation>
        <location evidence="1">Cell inner membrane</location>
        <topology evidence="1">Multi-pass membrane protein</topology>
    </subcellularLocation>
</comment>
<comment type="similarity">
    <text evidence="1">Belongs to the FrdC family.</text>
</comment>
<evidence type="ECO:0000255" key="1">
    <source>
        <dbReference type="HAMAP-Rule" id="MF_00708"/>
    </source>
</evidence>
<proteinExistence type="inferred from homology"/>
<organism>
    <name type="scientific">Escherichia fergusonii (strain ATCC 35469 / DSM 13698 / CCUG 18766 / IAM 14443 / JCM 21226 / LMG 7866 / NBRC 102419 / NCTC 12128 / CDC 0568-73)</name>
    <dbReference type="NCBI Taxonomy" id="585054"/>
    <lineage>
        <taxon>Bacteria</taxon>
        <taxon>Pseudomonadati</taxon>
        <taxon>Pseudomonadota</taxon>
        <taxon>Gammaproteobacteria</taxon>
        <taxon>Enterobacterales</taxon>
        <taxon>Enterobacteriaceae</taxon>
        <taxon>Escherichia</taxon>
    </lineage>
</organism>